<protein>
    <recommendedName>
        <fullName evidence="1">Peptidase T</fullName>
        <ecNumber evidence="1">3.4.11.4</ecNumber>
    </recommendedName>
    <alternativeName>
        <fullName evidence="1">Aminotripeptidase</fullName>
        <shortName evidence="1">Tripeptidase</shortName>
    </alternativeName>
    <alternativeName>
        <fullName evidence="1">Tripeptide aminopeptidase</fullName>
    </alternativeName>
</protein>
<proteinExistence type="inferred from homology"/>
<accession>A7WZN6</accession>
<gene>
    <name evidence="1" type="primary">pepT</name>
    <name type="ordered locus">SAHV_0740</name>
</gene>
<name>PEPT_STAA1</name>
<reference key="1">
    <citation type="journal article" date="2008" name="Antimicrob. Agents Chemother.">
        <title>Mutated response regulator graR is responsible for phenotypic conversion of Staphylococcus aureus from heterogeneous vancomycin-intermediate resistance to vancomycin-intermediate resistance.</title>
        <authorList>
            <person name="Neoh H.-M."/>
            <person name="Cui L."/>
            <person name="Yuzawa H."/>
            <person name="Takeuchi F."/>
            <person name="Matsuo M."/>
            <person name="Hiramatsu K."/>
        </authorList>
    </citation>
    <scope>NUCLEOTIDE SEQUENCE [LARGE SCALE GENOMIC DNA]</scope>
    <source>
        <strain>Mu3 / ATCC 700698</strain>
    </source>
</reference>
<evidence type="ECO:0000255" key="1">
    <source>
        <dbReference type="HAMAP-Rule" id="MF_00550"/>
    </source>
</evidence>
<dbReference type="EC" id="3.4.11.4" evidence="1"/>
<dbReference type="EMBL" id="AP009324">
    <property type="protein sequence ID" value="BAF77623.1"/>
    <property type="molecule type" value="Genomic_DNA"/>
</dbReference>
<dbReference type="RefSeq" id="WP_000795811.1">
    <property type="nucleotide sequence ID" value="NC_009782.1"/>
</dbReference>
<dbReference type="SMR" id="A7WZN6"/>
<dbReference type="MEROPS" id="M20.003"/>
<dbReference type="KEGG" id="saw:SAHV_0740"/>
<dbReference type="HOGENOM" id="CLU_053676_0_0_9"/>
<dbReference type="GO" id="GO:0005829">
    <property type="term" value="C:cytosol"/>
    <property type="evidence" value="ECO:0007669"/>
    <property type="project" value="TreeGrafter"/>
</dbReference>
<dbReference type="GO" id="GO:0008237">
    <property type="term" value="F:metallopeptidase activity"/>
    <property type="evidence" value="ECO:0007669"/>
    <property type="project" value="UniProtKB-KW"/>
</dbReference>
<dbReference type="GO" id="GO:0045148">
    <property type="term" value="F:tripeptide aminopeptidase activity"/>
    <property type="evidence" value="ECO:0007669"/>
    <property type="project" value="UniProtKB-UniRule"/>
</dbReference>
<dbReference type="GO" id="GO:0008270">
    <property type="term" value="F:zinc ion binding"/>
    <property type="evidence" value="ECO:0007669"/>
    <property type="project" value="UniProtKB-UniRule"/>
</dbReference>
<dbReference type="GO" id="GO:0043171">
    <property type="term" value="P:peptide catabolic process"/>
    <property type="evidence" value="ECO:0007669"/>
    <property type="project" value="UniProtKB-UniRule"/>
</dbReference>
<dbReference type="GO" id="GO:0006508">
    <property type="term" value="P:proteolysis"/>
    <property type="evidence" value="ECO:0007669"/>
    <property type="project" value="UniProtKB-UniRule"/>
</dbReference>
<dbReference type="CDD" id="cd03892">
    <property type="entry name" value="M20_peptT"/>
    <property type="match status" value="1"/>
</dbReference>
<dbReference type="FunFam" id="3.30.70.360:FF:000002">
    <property type="entry name" value="Peptidase T"/>
    <property type="match status" value="1"/>
</dbReference>
<dbReference type="Gene3D" id="3.30.70.360">
    <property type="match status" value="1"/>
</dbReference>
<dbReference type="Gene3D" id="3.40.630.10">
    <property type="entry name" value="Zn peptidases"/>
    <property type="match status" value="1"/>
</dbReference>
<dbReference type="HAMAP" id="MF_00550">
    <property type="entry name" value="Aminopeptidase_M20"/>
    <property type="match status" value="1"/>
</dbReference>
<dbReference type="InterPro" id="IPR001261">
    <property type="entry name" value="ArgE/DapE_CS"/>
</dbReference>
<dbReference type="InterPro" id="IPR036264">
    <property type="entry name" value="Bact_exopeptidase_dim_dom"/>
</dbReference>
<dbReference type="InterPro" id="IPR002933">
    <property type="entry name" value="Peptidase_M20"/>
</dbReference>
<dbReference type="InterPro" id="IPR011650">
    <property type="entry name" value="Peptidase_M20_dimer"/>
</dbReference>
<dbReference type="InterPro" id="IPR010161">
    <property type="entry name" value="Peptidase_M20B"/>
</dbReference>
<dbReference type="NCBIfam" id="TIGR01882">
    <property type="entry name" value="peptidase-T"/>
    <property type="match status" value="1"/>
</dbReference>
<dbReference type="NCBIfam" id="NF003976">
    <property type="entry name" value="PRK05469.1"/>
    <property type="match status" value="1"/>
</dbReference>
<dbReference type="NCBIfam" id="NF009920">
    <property type="entry name" value="PRK13381.1"/>
    <property type="match status" value="1"/>
</dbReference>
<dbReference type="PANTHER" id="PTHR42994">
    <property type="entry name" value="PEPTIDASE T"/>
    <property type="match status" value="1"/>
</dbReference>
<dbReference type="PANTHER" id="PTHR42994:SF1">
    <property type="entry name" value="PEPTIDASE T"/>
    <property type="match status" value="1"/>
</dbReference>
<dbReference type="Pfam" id="PF07687">
    <property type="entry name" value="M20_dimer"/>
    <property type="match status" value="1"/>
</dbReference>
<dbReference type="Pfam" id="PF01546">
    <property type="entry name" value="Peptidase_M20"/>
    <property type="match status" value="1"/>
</dbReference>
<dbReference type="PIRSF" id="PIRSF037215">
    <property type="entry name" value="Peptidase_M20B"/>
    <property type="match status" value="1"/>
</dbReference>
<dbReference type="SUPFAM" id="SSF55031">
    <property type="entry name" value="Bacterial exopeptidase dimerisation domain"/>
    <property type="match status" value="1"/>
</dbReference>
<dbReference type="SUPFAM" id="SSF53187">
    <property type="entry name" value="Zn-dependent exopeptidases"/>
    <property type="match status" value="1"/>
</dbReference>
<dbReference type="PROSITE" id="PS00758">
    <property type="entry name" value="ARGE_DAPE_CPG2_1"/>
    <property type="match status" value="1"/>
</dbReference>
<dbReference type="PROSITE" id="PS00759">
    <property type="entry name" value="ARGE_DAPE_CPG2_2"/>
    <property type="match status" value="1"/>
</dbReference>
<sequence>MKNQLIDRLTRYTTIDTQSDPKSTTTPSTEKQWDLLHLLEKELQQLGLPTDLDENGYLFATLESNIDADVPTVGFLAHVDTSPDFNASNVKPQIIENYDGKPYKLGNTKRVLDPKVFPELNSLVGHTLMVTDGTSLLGADDKAGIVEIMEAICYLQEHPEIKHGTIRIGFTPDEEIGRGPHKFDVDRFNADFAYTMDGSQYGELQYESFNAAEAVITCHGVNVHPGSAKNAMVNAIRLGEQFDSLLPDSEVPERTEGYEGFYHLMNFEGTVEKATLQYIIRDHDKKQFELRKKRILEIRDDINAHFENYPVKVDISDQYFNMAEKILPLPHIIDIPKRVFAKLDIPANTEPIRGGTDGSQLSFMGLPTPNIFTGCGNFHGPYEYASIDVMEKAVQVIIGIVEDIAENH</sequence>
<comment type="function">
    <text evidence="1">Cleaves the N-terminal amino acid of tripeptides.</text>
</comment>
<comment type="catalytic activity">
    <reaction evidence="1">
        <text>Release of the N-terminal residue from a tripeptide.</text>
        <dbReference type="EC" id="3.4.11.4"/>
    </reaction>
</comment>
<comment type="cofactor">
    <cofactor evidence="1">
        <name>Zn(2+)</name>
        <dbReference type="ChEBI" id="CHEBI:29105"/>
    </cofactor>
    <text evidence="1">Binds 2 Zn(2+) ions per subunit.</text>
</comment>
<comment type="subcellular location">
    <subcellularLocation>
        <location evidence="1">Cytoplasm</location>
    </subcellularLocation>
</comment>
<comment type="similarity">
    <text evidence="1">Belongs to the peptidase M20B family.</text>
</comment>
<keyword id="KW-0031">Aminopeptidase</keyword>
<keyword id="KW-0963">Cytoplasm</keyword>
<keyword id="KW-0378">Hydrolase</keyword>
<keyword id="KW-0479">Metal-binding</keyword>
<keyword id="KW-0482">Metalloprotease</keyword>
<keyword id="KW-0645">Protease</keyword>
<keyword id="KW-0862">Zinc</keyword>
<feature type="chain" id="PRO_1000017852" description="Peptidase T">
    <location>
        <begin position="1"/>
        <end position="408"/>
    </location>
</feature>
<feature type="active site" evidence="1">
    <location>
        <position position="80"/>
    </location>
</feature>
<feature type="active site" description="Proton acceptor" evidence="1">
    <location>
        <position position="174"/>
    </location>
</feature>
<feature type="binding site" evidence="1">
    <location>
        <position position="78"/>
    </location>
    <ligand>
        <name>Zn(2+)</name>
        <dbReference type="ChEBI" id="CHEBI:29105"/>
        <label>1</label>
    </ligand>
</feature>
<feature type="binding site" evidence="1">
    <location>
        <position position="140"/>
    </location>
    <ligand>
        <name>Zn(2+)</name>
        <dbReference type="ChEBI" id="CHEBI:29105"/>
        <label>1</label>
    </ligand>
</feature>
<feature type="binding site" evidence="1">
    <location>
        <position position="140"/>
    </location>
    <ligand>
        <name>Zn(2+)</name>
        <dbReference type="ChEBI" id="CHEBI:29105"/>
        <label>2</label>
    </ligand>
</feature>
<feature type="binding site" evidence="1">
    <location>
        <position position="175"/>
    </location>
    <ligand>
        <name>Zn(2+)</name>
        <dbReference type="ChEBI" id="CHEBI:29105"/>
        <label>2</label>
    </ligand>
</feature>
<feature type="binding site" evidence="1">
    <location>
        <position position="197"/>
    </location>
    <ligand>
        <name>Zn(2+)</name>
        <dbReference type="ChEBI" id="CHEBI:29105"/>
        <label>1</label>
    </ligand>
</feature>
<feature type="binding site" evidence="1">
    <location>
        <position position="379"/>
    </location>
    <ligand>
        <name>Zn(2+)</name>
        <dbReference type="ChEBI" id="CHEBI:29105"/>
        <label>2</label>
    </ligand>
</feature>
<organism>
    <name type="scientific">Staphylococcus aureus (strain Mu3 / ATCC 700698)</name>
    <dbReference type="NCBI Taxonomy" id="418127"/>
    <lineage>
        <taxon>Bacteria</taxon>
        <taxon>Bacillati</taxon>
        <taxon>Bacillota</taxon>
        <taxon>Bacilli</taxon>
        <taxon>Bacillales</taxon>
        <taxon>Staphylococcaceae</taxon>
        <taxon>Staphylococcus</taxon>
    </lineage>
</organism>